<sequence>MQAPAGLAVKAPLIANSDLMSGKPSLIGLTREEMGEALAEIGVPQKQVKMRVSQLWNWLYVRGVSDFDNMTNVAKELREKLKAAFTIARPEIVEEQISNDGTRKWLMRFPPRGAGRPVEIETVYIPEEGRGTLCISSQVGCSLTCSFCHTGTQRLVRNLTAEEILSQLLLARDRLGDFPDGSTPVGAYVPSEGRKVSNIVMMGMGEPLYNFEHVKTALLIATDGDGLSLSKRRVTLSTSGVVPEIFRTGDEIGVMLAISLHAVRDDLRDMLVPINKKYPLKELIEACRNYPGVSNARRITFEYVMLKDVNDSLEDAKMLVQLLKGVPAKINLIPFNPWPGTNYQCSEWAQIEKFADFINQAGYASPIRTPRGRDILAACGQLKSESERMRKTERLAFEAMMIANHGADD</sequence>
<dbReference type="EC" id="2.1.1.192" evidence="1"/>
<dbReference type="EMBL" id="AE007869">
    <property type="protein sequence ID" value="AAK88395.2"/>
    <property type="status" value="ALT_INIT"/>
    <property type="molecule type" value="Genomic_DNA"/>
</dbReference>
<dbReference type="RefSeq" id="NP_355610.2">
    <property type="nucleotide sequence ID" value="NC_003062.2"/>
</dbReference>
<dbReference type="RefSeq" id="WP_010972481.1">
    <property type="nucleotide sequence ID" value="NC_003062.2"/>
</dbReference>
<dbReference type="SMR" id="Q7CWI1"/>
<dbReference type="STRING" id="176299.Atu2673"/>
<dbReference type="EnsemblBacteria" id="AAK88395">
    <property type="protein sequence ID" value="AAK88395"/>
    <property type="gene ID" value="Atu2673"/>
</dbReference>
<dbReference type="GeneID" id="1134711"/>
<dbReference type="KEGG" id="atu:Atu2673"/>
<dbReference type="PATRIC" id="fig|176299.10.peg.2681"/>
<dbReference type="eggNOG" id="COG0820">
    <property type="taxonomic scope" value="Bacteria"/>
</dbReference>
<dbReference type="HOGENOM" id="CLU_029101_2_0_5"/>
<dbReference type="OrthoDB" id="9793973at2"/>
<dbReference type="Proteomes" id="UP000000813">
    <property type="component" value="Chromosome circular"/>
</dbReference>
<dbReference type="GO" id="GO:0005737">
    <property type="term" value="C:cytoplasm"/>
    <property type="evidence" value="ECO:0007669"/>
    <property type="project" value="UniProtKB-SubCell"/>
</dbReference>
<dbReference type="GO" id="GO:0051539">
    <property type="term" value="F:4 iron, 4 sulfur cluster binding"/>
    <property type="evidence" value="ECO:0007669"/>
    <property type="project" value="UniProtKB-UniRule"/>
</dbReference>
<dbReference type="GO" id="GO:0046872">
    <property type="term" value="F:metal ion binding"/>
    <property type="evidence" value="ECO:0007669"/>
    <property type="project" value="UniProtKB-KW"/>
</dbReference>
<dbReference type="GO" id="GO:0070040">
    <property type="term" value="F:rRNA (adenine(2503)-C2-)-methyltransferase activity"/>
    <property type="evidence" value="ECO:0007669"/>
    <property type="project" value="UniProtKB-UniRule"/>
</dbReference>
<dbReference type="GO" id="GO:0019843">
    <property type="term" value="F:rRNA binding"/>
    <property type="evidence" value="ECO:0007669"/>
    <property type="project" value="UniProtKB-UniRule"/>
</dbReference>
<dbReference type="GO" id="GO:0002935">
    <property type="term" value="F:tRNA (adenine(37)-C2)-methyltransferase activity"/>
    <property type="evidence" value="ECO:0007669"/>
    <property type="project" value="UniProtKB-UniRule"/>
</dbReference>
<dbReference type="GO" id="GO:0000049">
    <property type="term" value="F:tRNA binding"/>
    <property type="evidence" value="ECO:0007669"/>
    <property type="project" value="UniProtKB-UniRule"/>
</dbReference>
<dbReference type="GO" id="GO:0070475">
    <property type="term" value="P:rRNA base methylation"/>
    <property type="evidence" value="ECO:0007669"/>
    <property type="project" value="UniProtKB-UniRule"/>
</dbReference>
<dbReference type="GO" id="GO:0030488">
    <property type="term" value="P:tRNA methylation"/>
    <property type="evidence" value="ECO:0007669"/>
    <property type="project" value="UniProtKB-UniRule"/>
</dbReference>
<dbReference type="CDD" id="cd01335">
    <property type="entry name" value="Radical_SAM"/>
    <property type="match status" value="1"/>
</dbReference>
<dbReference type="FunFam" id="3.20.20.70:FF:000008">
    <property type="entry name" value="Dual-specificity RNA methyltransferase RlmN"/>
    <property type="match status" value="1"/>
</dbReference>
<dbReference type="Gene3D" id="1.10.150.530">
    <property type="match status" value="1"/>
</dbReference>
<dbReference type="Gene3D" id="3.20.20.70">
    <property type="entry name" value="Aldolase class I"/>
    <property type="match status" value="1"/>
</dbReference>
<dbReference type="HAMAP" id="MF_01849">
    <property type="entry name" value="RNA_methyltr_RlmN"/>
    <property type="match status" value="1"/>
</dbReference>
<dbReference type="InterPro" id="IPR013785">
    <property type="entry name" value="Aldolase_TIM"/>
</dbReference>
<dbReference type="InterPro" id="IPR040072">
    <property type="entry name" value="Methyltransferase_A"/>
</dbReference>
<dbReference type="InterPro" id="IPR048641">
    <property type="entry name" value="RlmN_N"/>
</dbReference>
<dbReference type="InterPro" id="IPR027492">
    <property type="entry name" value="RNA_MTrfase_RlmN"/>
</dbReference>
<dbReference type="InterPro" id="IPR004383">
    <property type="entry name" value="rRNA_lsu_MTrfase_RlmN/Cfr"/>
</dbReference>
<dbReference type="InterPro" id="IPR007197">
    <property type="entry name" value="rSAM"/>
</dbReference>
<dbReference type="NCBIfam" id="TIGR00048">
    <property type="entry name" value="rRNA_mod_RlmN"/>
    <property type="match status" value="1"/>
</dbReference>
<dbReference type="PANTHER" id="PTHR30544">
    <property type="entry name" value="23S RRNA METHYLTRANSFERASE"/>
    <property type="match status" value="1"/>
</dbReference>
<dbReference type="PANTHER" id="PTHR30544:SF5">
    <property type="entry name" value="RADICAL SAM CORE DOMAIN-CONTAINING PROTEIN"/>
    <property type="match status" value="1"/>
</dbReference>
<dbReference type="Pfam" id="PF04055">
    <property type="entry name" value="Radical_SAM"/>
    <property type="match status" value="1"/>
</dbReference>
<dbReference type="Pfam" id="PF21016">
    <property type="entry name" value="RlmN_N"/>
    <property type="match status" value="1"/>
</dbReference>
<dbReference type="PIRSF" id="PIRSF006004">
    <property type="entry name" value="CHP00048"/>
    <property type="match status" value="1"/>
</dbReference>
<dbReference type="SFLD" id="SFLDF00275">
    <property type="entry name" value="adenosine_C2_methyltransferase"/>
    <property type="match status" value="1"/>
</dbReference>
<dbReference type="SFLD" id="SFLDG01062">
    <property type="entry name" value="methyltransferase_(Class_A)"/>
    <property type="match status" value="1"/>
</dbReference>
<dbReference type="SUPFAM" id="SSF102114">
    <property type="entry name" value="Radical SAM enzymes"/>
    <property type="match status" value="1"/>
</dbReference>
<dbReference type="PROSITE" id="PS51918">
    <property type="entry name" value="RADICAL_SAM"/>
    <property type="match status" value="1"/>
</dbReference>
<comment type="function">
    <text evidence="1">Specifically methylates position 2 of adenine 2503 in 23S rRNA and position 2 of adenine 37 in tRNAs. m2A2503 modification seems to play a crucial role in the proofreading step occurring at the peptidyl transferase center and thus would serve to optimize ribosomal fidelity.</text>
</comment>
<comment type="catalytic activity">
    <reaction evidence="1">
        <text>adenosine(2503) in 23S rRNA + 2 reduced [2Fe-2S]-[ferredoxin] + 2 S-adenosyl-L-methionine = 2-methyladenosine(2503) in 23S rRNA + 5'-deoxyadenosine + L-methionine + 2 oxidized [2Fe-2S]-[ferredoxin] + S-adenosyl-L-homocysteine</text>
        <dbReference type="Rhea" id="RHEA:42916"/>
        <dbReference type="Rhea" id="RHEA-COMP:10000"/>
        <dbReference type="Rhea" id="RHEA-COMP:10001"/>
        <dbReference type="Rhea" id="RHEA-COMP:10152"/>
        <dbReference type="Rhea" id="RHEA-COMP:10282"/>
        <dbReference type="ChEBI" id="CHEBI:17319"/>
        <dbReference type="ChEBI" id="CHEBI:33737"/>
        <dbReference type="ChEBI" id="CHEBI:33738"/>
        <dbReference type="ChEBI" id="CHEBI:57844"/>
        <dbReference type="ChEBI" id="CHEBI:57856"/>
        <dbReference type="ChEBI" id="CHEBI:59789"/>
        <dbReference type="ChEBI" id="CHEBI:74411"/>
        <dbReference type="ChEBI" id="CHEBI:74497"/>
        <dbReference type="EC" id="2.1.1.192"/>
    </reaction>
</comment>
<comment type="catalytic activity">
    <reaction evidence="1">
        <text>adenosine(37) in tRNA + 2 reduced [2Fe-2S]-[ferredoxin] + 2 S-adenosyl-L-methionine = 2-methyladenosine(37) in tRNA + 5'-deoxyadenosine + L-methionine + 2 oxidized [2Fe-2S]-[ferredoxin] + S-adenosyl-L-homocysteine</text>
        <dbReference type="Rhea" id="RHEA:43332"/>
        <dbReference type="Rhea" id="RHEA-COMP:10000"/>
        <dbReference type="Rhea" id="RHEA-COMP:10001"/>
        <dbReference type="Rhea" id="RHEA-COMP:10162"/>
        <dbReference type="Rhea" id="RHEA-COMP:10485"/>
        <dbReference type="ChEBI" id="CHEBI:17319"/>
        <dbReference type="ChEBI" id="CHEBI:33737"/>
        <dbReference type="ChEBI" id="CHEBI:33738"/>
        <dbReference type="ChEBI" id="CHEBI:57844"/>
        <dbReference type="ChEBI" id="CHEBI:57856"/>
        <dbReference type="ChEBI" id="CHEBI:59789"/>
        <dbReference type="ChEBI" id="CHEBI:74411"/>
        <dbReference type="ChEBI" id="CHEBI:74497"/>
        <dbReference type="EC" id="2.1.1.192"/>
    </reaction>
</comment>
<comment type="cofactor">
    <cofactor evidence="1">
        <name>[4Fe-4S] cluster</name>
        <dbReference type="ChEBI" id="CHEBI:49883"/>
    </cofactor>
    <text evidence="1">Binds 1 [4Fe-4S] cluster. The cluster is coordinated with 3 cysteines and an exchangeable S-adenosyl-L-methionine.</text>
</comment>
<comment type="subcellular location">
    <subcellularLocation>
        <location evidence="1">Cytoplasm</location>
    </subcellularLocation>
</comment>
<comment type="miscellaneous">
    <text evidence="1">Reaction proceeds by a ping-pong mechanism involving intermediate methylation of a conserved cysteine residue.</text>
</comment>
<comment type="similarity">
    <text evidence="1">Belongs to the radical SAM superfamily. RlmN family.</text>
</comment>
<comment type="sequence caution" evidence="3">
    <conflict type="erroneous initiation">
        <sequence resource="EMBL-CDS" id="AAK88395"/>
    </conflict>
</comment>
<organism>
    <name type="scientific">Agrobacterium fabrum (strain C58 / ATCC 33970)</name>
    <name type="common">Agrobacterium tumefaciens (strain C58)</name>
    <dbReference type="NCBI Taxonomy" id="176299"/>
    <lineage>
        <taxon>Bacteria</taxon>
        <taxon>Pseudomonadati</taxon>
        <taxon>Pseudomonadota</taxon>
        <taxon>Alphaproteobacteria</taxon>
        <taxon>Hyphomicrobiales</taxon>
        <taxon>Rhizobiaceae</taxon>
        <taxon>Rhizobium/Agrobacterium group</taxon>
        <taxon>Agrobacterium</taxon>
        <taxon>Agrobacterium tumefaciens complex</taxon>
    </lineage>
</organism>
<name>RLMN_AGRFC</name>
<reference key="1">
    <citation type="journal article" date="2001" name="Science">
        <title>Genome sequence of the plant pathogen and biotechnology agent Agrobacterium tumefaciens C58.</title>
        <authorList>
            <person name="Goodner B."/>
            <person name="Hinkle G."/>
            <person name="Gattung S."/>
            <person name="Miller N."/>
            <person name="Blanchard M."/>
            <person name="Qurollo B."/>
            <person name="Goldman B.S."/>
            <person name="Cao Y."/>
            <person name="Askenazi M."/>
            <person name="Halling C."/>
            <person name="Mullin L."/>
            <person name="Houmiel K."/>
            <person name="Gordon J."/>
            <person name="Vaudin M."/>
            <person name="Iartchouk O."/>
            <person name="Epp A."/>
            <person name="Liu F."/>
            <person name="Wollam C."/>
            <person name="Allinger M."/>
            <person name="Doughty D."/>
            <person name="Scott C."/>
            <person name="Lappas C."/>
            <person name="Markelz B."/>
            <person name="Flanagan C."/>
            <person name="Crowell C."/>
            <person name="Gurson J."/>
            <person name="Lomo C."/>
            <person name="Sear C."/>
            <person name="Strub G."/>
            <person name="Cielo C."/>
            <person name="Slater S."/>
        </authorList>
    </citation>
    <scope>NUCLEOTIDE SEQUENCE [LARGE SCALE GENOMIC DNA]</scope>
    <source>
        <strain>C58 / ATCC 33970</strain>
    </source>
</reference>
<reference key="2">
    <citation type="journal article" date="2001" name="Science">
        <title>The genome of the natural genetic engineer Agrobacterium tumefaciens C58.</title>
        <authorList>
            <person name="Wood D.W."/>
            <person name="Setubal J.C."/>
            <person name="Kaul R."/>
            <person name="Monks D.E."/>
            <person name="Kitajima J.P."/>
            <person name="Okura V.K."/>
            <person name="Zhou Y."/>
            <person name="Chen L."/>
            <person name="Wood G.E."/>
            <person name="Almeida N.F. Jr."/>
            <person name="Woo L."/>
            <person name="Chen Y."/>
            <person name="Paulsen I.T."/>
            <person name="Eisen J.A."/>
            <person name="Karp P.D."/>
            <person name="Bovee D. Sr."/>
            <person name="Chapman P."/>
            <person name="Clendenning J."/>
            <person name="Deatherage G."/>
            <person name="Gillet W."/>
            <person name="Grant C."/>
            <person name="Kutyavin T."/>
            <person name="Levy R."/>
            <person name="Li M.-J."/>
            <person name="McClelland E."/>
            <person name="Palmieri A."/>
            <person name="Raymond C."/>
            <person name="Rouse G."/>
            <person name="Saenphimmachak C."/>
            <person name="Wu Z."/>
            <person name="Romero P."/>
            <person name="Gordon D."/>
            <person name="Zhang S."/>
            <person name="Yoo H."/>
            <person name="Tao Y."/>
            <person name="Biddle P."/>
            <person name="Jung M."/>
            <person name="Krespan W."/>
            <person name="Perry M."/>
            <person name="Gordon-Kamm B."/>
            <person name="Liao L."/>
            <person name="Kim S."/>
            <person name="Hendrick C."/>
            <person name="Zhao Z.-Y."/>
            <person name="Dolan M."/>
            <person name="Chumley F."/>
            <person name="Tingey S.V."/>
            <person name="Tomb J.-F."/>
            <person name="Gordon M.P."/>
            <person name="Olson M.V."/>
            <person name="Nester E.W."/>
        </authorList>
    </citation>
    <scope>NUCLEOTIDE SEQUENCE [LARGE SCALE GENOMIC DNA]</scope>
    <source>
        <strain>C58 / ATCC 33970</strain>
    </source>
</reference>
<proteinExistence type="inferred from homology"/>
<protein>
    <recommendedName>
        <fullName evidence="1">Dual-specificity RNA methyltransferase RlmN</fullName>
        <ecNumber evidence="1">2.1.1.192</ecNumber>
    </recommendedName>
    <alternativeName>
        <fullName evidence="1">23S rRNA (adenine(2503)-C(2))-methyltransferase</fullName>
    </alternativeName>
    <alternativeName>
        <fullName evidence="1">23S rRNA m2A2503 methyltransferase</fullName>
    </alternativeName>
    <alternativeName>
        <fullName evidence="1">Ribosomal RNA large subunit methyltransferase N</fullName>
    </alternativeName>
    <alternativeName>
        <fullName evidence="1">tRNA (adenine(37)-C(2))-methyltransferase</fullName>
    </alternativeName>
    <alternativeName>
        <fullName evidence="1">tRNA m2A37 methyltransferase</fullName>
    </alternativeName>
</protein>
<accession>Q7CWI1</accession>
<feature type="chain" id="PRO_0000350006" description="Dual-specificity RNA methyltransferase RlmN">
    <location>
        <begin position="1"/>
        <end position="409"/>
    </location>
</feature>
<feature type="domain" description="Radical SAM core" evidence="2">
    <location>
        <begin position="127"/>
        <end position="376"/>
    </location>
</feature>
<feature type="active site" description="Proton acceptor" evidence="1">
    <location>
        <position position="121"/>
    </location>
</feature>
<feature type="active site" description="S-methylcysteine intermediate" evidence="1">
    <location>
        <position position="379"/>
    </location>
</feature>
<feature type="binding site" evidence="1">
    <location>
        <position position="141"/>
    </location>
    <ligand>
        <name>[4Fe-4S] cluster</name>
        <dbReference type="ChEBI" id="CHEBI:49883"/>
        <note>4Fe-4S-S-AdoMet</note>
    </ligand>
</feature>
<feature type="binding site" evidence="1">
    <location>
        <position position="145"/>
    </location>
    <ligand>
        <name>[4Fe-4S] cluster</name>
        <dbReference type="ChEBI" id="CHEBI:49883"/>
        <note>4Fe-4S-S-AdoMet</note>
    </ligand>
</feature>
<feature type="binding site" evidence="1">
    <location>
        <position position="148"/>
    </location>
    <ligand>
        <name>[4Fe-4S] cluster</name>
        <dbReference type="ChEBI" id="CHEBI:49883"/>
        <note>4Fe-4S-S-AdoMet</note>
    </ligand>
</feature>
<feature type="binding site" evidence="1">
    <location>
        <begin position="205"/>
        <end position="206"/>
    </location>
    <ligand>
        <name>S-adenosyl-L-methionine</name>
        <dbReference type="ChEBI" id="CHEBI:59789"/>
    </ligand>
</feature>
<feature type="binding site" evidence="1">
    <location>
        <position position="237"/>
    </location>
    <ligand>
        <name>S-adenosyl-L-methionine</name>
        <dbReference type="ChEBI" id="CHEBI:59789"/>
    </ligand>
</feature>
<feature type="binding site" evidence="1">
    <location>
        <begin position="259"/>
        <end position="261"/>
    </location>
    <ligand>
        <name>S-adenosyl-L-methionine</name>
        <dbReference type="ChEBI" id="CHEBI:59789"/>
    </ligand>
</feature>
<feature type="binding site" evidence="1">
    <location>
        <position position="336"/>
    </location>
    <ligand>
        <name>S-adenosyl-L-methionine</name>
        <dbReference type="ChEBI" id="CHEBI:59789"/>
    </ligand>
</feature>
<feature type="disulfide bond" description="(transient)" evidence="1">
    <location>
        <begin position="134"/>
        <end position="379"/>
    </location>
</feature>
<evidence type="ECO:0000255" key="1">
    <source>
        <dbReference type="HAMAP-Rule" id="MF_01849"/>
    </source>
</evidence>
<evidence type="ECO:0000255" key="2">
    <source>
        <dbReference type="PROSITE-ProRule" id="PRU01266"/>
    </source>
</evidence>
<evidence type="ECO:0000305" key="3"/>
<keyword id="KW-0004">4Fe-4S</keyword>
<keyword id="KW-0963">Cytoplasm</keyword>
<keyword id="KW-1015">Disulfide bond</keyword>
<keyword id="KW-0408">Iron</keyword>
<keyword id="KW-0411">Iron-sulfur</keyword>
<keyword id="KW-0479">Metal-binding</keyword>
<keyword id="KW-0489">Methyltransferase</keyword>
<keyword id="KW-1185">Reference proteome</keyword>
<keyword id="KW-0698">rRNA processing</keyword>
<keyword id="KW-0949">S-adenosyl-L-methionine</keyword>
<keyword id="KW-0808">Transferase</keyword>
<keyword id="KW-0819">tRNA processing</keyword>
<gene>
    <name evidence="1" type="primary">rlmN</name>
    <name type="ordered locus">Atu2673</name>
    <name type="ORF">AGR_C_4846</name>
</gene>